<name>METK_MYCVP</name>
<proteinExistence type="inferred from homology"/>
<evidence type="ECO:0000255" key="1">
    <source>
        <dbReference type="HAMAP-Rule" id="MF_00086"/>
    </source>
</evidence>
<organism>
    <name type="scientific">Mycolicibacterium vanbaalenii (strain DSM 7251 / JCM 13017 / BCRC 16820 / KCTC 9966 / NRRL B-24157 / PYR-1)</name>
    <name type="common">Mycobacterium vanbaalenii</name>
    <dbReference type="NCBI Taxonomy" id="350058"/>
    <lineage>
        <taxon>Bacteria</taxon>
        <taxon>Bacillati</taxon>
        <taxon>Actinomycetota</taxon>
        <taxon>Actinomycetes</taxon>
        <taxon>Mycobacteriales</taxon>
        <taxon>Mycobacteriaceae</taxon>
        <taxon>Mycolicibacterium</taxon>
    </lineage>
</organism>
<reference key="1">
    <citation type="submission" date="2006-12" db="EMBL/GenBank/DDBJ databases">
        <title>Complete sequence of Mycobacterium vanbaalenii PYR-1.</title>
        <authorList>
            <consortium name="US DOE Joint Genome Institute"/>
            <person name="Copeland A."/>
            <person name="Lucas S."/>
            <person name="Lapidus A."/>
            <person name="Barry K."/>
            <person name="Detter J.C."/>
            <person name="Glavina del Rio T."/>
            <person name="Hammon N."/>
            <person name="Israni S."/>
            <person name="Dalin E."/>
            <person name="Tice H."/>
            <person name="Pitluck S."/>
            <person name="Singan V."/>
            <person name="Schmutz J."/>
            <person name="Larimer F."/>
            <person name="Land M."/>
            <person name="Hauser L."/>
            <person name="Kyrpides N."/>
            <person name="Anderson I.J."/>
            <person name="Miller C."/>
            <person name="Richardson P."/>
        </authorList>
    </citation>
    <scope>NUCLEOTIDE SEQUENCE [LARGE SCALE GENOMIC DNA]</scope>
    <source>
        <strain>DSM 7251 / JCM 13017 / BCRC 16820 / KCTC 9966 / NRRL B-24157 / PYR-1</strain>
    </source>
</reference>
<gene>
    <name evidence="1" type="primary">metK</name>
    <name type="ordered locus">Mvan_2670</name>
</gene>
<dbReference type="EC" id="2.5.1.6" evidence="1"/>
<dbReference type="EMBL" id="CP000511">
    <property type="protein sequence ID" value="ABM13477.1"/>
    <property type="molecule type" value="Genomic_DNA"/>
</dbReference>
<dbReference type="RefSeq" id="WP_011779885.1">
    <property type="nucleotide sequence ID" value="NZ_JACKSD010000206.1"/>
</dbReference>
<dbReference type="SMR" id="A1T8H7"/>
<dbReference type="STRING" id="350058.Mvan_2670"/>
<dbReference type="KEGG" id="mva:Mvan_2670"/>
<dbReference type="eggNOG" id="COG0192">
    <property type="taxonomic scope" value="Bacteria"/>
</dbReference>
<dbReference type="HOGENOM" id="CLU_041802_1_1_11"/>
<dbReference type="UniPathway" id="UPA00315">
    <property type="reaction ID" value="UER00080"/>
</dbReference>
<dbReference type="Proteomes" id="UP000009159">
    <property type="component" value="Chromosome"/>
</dbReference>
<dbReference type="GO" id="GO:0005737">
    <property type="term" value="C:cytoplasm"/>
    <property type="evidence" value="ECO:0007669"/>
    <property type="project" value="UniProtKB-SubCell"/>
</dbReference>
<dbReference type="GO" id="GO:0005524">
    <property type="term" value="F:ATP binding"/>
    <property type="evidence" value="ECO:0007669"/>
    <property type="project" value="UniProtKB-UniRule"/>
</dbReference>
<dbReference type="GO" id="GO:0000287">
    <property type="term" value="F:magnesium ion binding"/>
    <property type="evidence" value="ECO:0007669"/>
    <property type="project" value="UniProtKB-UniRule"/>
</dbReference>
<dbReference type="GO" id="GO:0004478">
    <property type="term" value="F:methionine adenosyltransferase activity"/>
    <property type="evidence" value="ECO:0007669"/>
    <property type="project" value="UniProtKB-UniRule"/>
</dbReference>
<dbReference type="GO" id="GO:0006730">
    <property type="term" value="P:one-carbon metabolic process"/>
    <property type="evidence" value="ECO:0007669"/>
    <property type="project" value="UniProtKB-KW"/>
</dbReference>
<dbReference type="GO" id="GO:0006556">
    <property type="term" value="P:S-adenosylmethionine biosynthetic process"/>
    <property type="evidence" value="ECO:0007669"/>
    <property type="project" value="UniProtKB-UniRule"/>
</dbReference>
<dbReference type="CDD" id="cd18079">
    <property type="entry name" value="S-AdoMet_synt"/>
    <property type="match status" value="1"/>
</dbReference>
<dbReference type="FunFam" id="3.30.300.10:FF:000006">
    <property type="entry name" value="S-adenosylmethionine synthase"/>
    <property type="match status" value="1"/>
</dbReference>
<dbReference type="Gene3D" id="3.30.300.10">
    <property type="match status" value="3"/>
</dbReference>
<dbReference type="HAMAP" id="MF_00086">
    <property type="entry name" value="S_AdoMet_synth1"/>
    <property type="match status" value="1"/>
</dbReference>
<dbReference type="InterPro" id="IPR022631">
    <property type="entry name" value="ADOMET_SYNTHASE_CS"/>
</dbReference>
<dbReference type="InterPro" id="IPR022630">
    <property type="entry name" value="S-AdoMet_synt_C"/>
</dbReference>
<dbReference type="InterPro" id="IPR022629">
    <property type="entry name" value="S-AdoMet_synt_central"/>
</dbReference>
<dbReference type="InterPro" id="IPR022628">
    <property type="entry name" value="S-AdoMet_synt_N"/>
</dbReference>
<dbReference type="InterPro" id="IPR002133">
    <property type="entry name" value="S-AdoMet_synthetase"/>
</dbReference>
<dbReference type="InterPro" id="IPR022636">
    <property type="entry name" value="S-AdoMet_synthetase_sfam"/>
</dbReference>
<dbReference type="NCBIfam" id="TIGR01034">
    <property type="entry name" value="metK"/>
    <property type="match status" value="1"/>
</dbReference>
<dbReference type="PANTHER" id="PTHR11964">
    <property type="entry name" value="S-ADENOSYLMETHIONINE SYNTHETASE"/>
    <property type="match status" value="1"/>
</dbReference>
<dbReference type="Pfam" id="PF02773">
    <property type="entry name" value="S-AdoMet_synt_C"/>
    <property type="match status" value="1"/>
</dbReference>
<dbReference type="Pfam" id="PF02772">
    <property type="entry name" value="S-AdoMet_synt_M"/>
    <property type="match status" value="1"/>
</dbReference>
<dbReference type="Pfam" id="PF00438">
    <property type="entry name" value="S-AdoMet_synt_N"/>
    <property type="match status" value="1"/>
</dbReference>
<dbReference type="PIRSF" id="PIRSF000497">
    <property type="entry name" value="MAT"/>
    <property type="match status" value="1"/>
</dbReference>
<dbReference type="SUPFAM" id="SSF55973">
    <property type="entry name" value="S-adenosylmethionine synthetase"/>
    <property type="match status" value="3"/>
</dbReference>
<dbReference type="PROSITE" id="PS00376">
    <property type="entry name" value="ADOMET_SYNTHASE_1"/>
    <property type="match status" value="1"/>
</dbReference>
<dbReference type="PROSITE" id="PS00377">
    <property type="entry name" value="ADOMET_SYNTHASE_2"/>
    <property type="match status" value="1"/>
</dbReference>
<protein>
    <recommendedName>
        <fullName evidence="1">S-adenosylmethionine synthase</fullName>
        <shortName evidence="1">AdoMet synthase</shortName>
        <ecNumber evidence="1">2.5.1.6</ecNumber>
    </recommendedName>
    <alternativeName>
        <fullName evidence="1">MAT</fullName>
    </alternativeName>
    <alternativeName>
        <fullName evidence="1">Methionine adenosyltransferase</fullName>
    </alternativeName>
</protein>
<accession>A1T8H7</accession>
<comment type="function">
    <text evidence="1">Catalyzes the formation of S-adenosylmethionine (AdoMet) from methionine and ATP. The overall synthetic reaction is composed of two sequential steps, AdoMet formation and the subsequent tripolyphosphate hydrolysis which occurs prior to release of AdoMet from the enzyme.</text>
</comment>
<comment type="catalytic activity">
    <reaction evidence="1">
        <text>L-methionine + ATP + H2O = S-adenosyl-L-methionine + phosphate + diphosphate</text>
        <dbReference type="Rhea" id="RHEA:21080"/>
        <dbReference type="ChEBI" id="CHEBI:15377"/>
        <dbReference type="ChEBI" id="CHEBI:30616"/>
        <dbReference type="ChEBI" id="CHEBI:33019"/>
        <dbReference type="ChEBI" id="CHEBI:43474"/>
        <dbReference type="ChEBI" id="CHEBI:57844"/>
        <dbReference type="ChEBI" id="CHEBI:59789"/>
        <dbReference type="EC" id="2.5.1.6"/>
    </reaction>
</comment>
<comment type="cofactor">
    <cofactor evidence="1">
        <name>Mg(2+)</name>
        <dbReference type="ChEBI" id="CHEBI:18420"/>
    </cofactor>
    <text evidence="1">Binds 2 divalent ions per subunit.</text>
</comment>
<comment type="cofactor">
    <cofactor evidence="1">
        <name>K(+)</name>
        <dbReference type="ChEBI" id="CHEBI:29103"/>
    </cofactor>
    <text evidence="1">Binds 1 potassium ion per subunit.</text>
</comment>
<comment type="pathway">
    <text evidence="1">Amino-acid biosynthesis; S-adenosyl-L-methionine biosynthesis; S-adenosyl-L-methionine from L-methionine: step 1/1.</text>
</comment>
<comment type="subunit">
    <text evidence="1">Homotetramer; dimer of dimers.</text>
</comment>
<comment type="subcellular location">
    <subcellularLocation>
        <location evidence="1">Cytoplasm</location>
    </subcellularLocation>
</comment>
<comment type="similarity">
    <text evidence="1">Belongs to the AdoMet synthase family.</text>
</comment>
<keyword id="KW-0067">ATP-binding</keyword>
<keyword id="KW-0963">Cytoplasm</keyword>
<keyword id="KW-0460">Magnesium</keyword>
<keyword id="KW-0479">Metal-binding</keyword>
<keyword id="KW-0547">Nucleotide-binding</keyword>
<keyword id="KW-0554">One-carbon metabolism</keyword>
<keyword id="KW-0630">Potassium</keyword>
<keyword id="KW-0808">Transferase</keyword>
<sequence length="402" mass="42813">MSDARLFTSESVTEGHPDKICDAISDSVLDALLADDPKSRVAVETLVTTGQVHVVGEVTTTAKAAFADITNTVRERILEIGYDHSDKGFDGLTCGVNIGIGKQSPDIAQGVDTAHETRVEGAADPLDSQGAGDQGLMFGYAIADTPELMPLPIALAHRLSRKLTEVRKNGTLDYLRPDGKTQVTVQYDGTTPVRLDTVVLSTQHADGIDLESQLAPEIKQHVIDAVLTELGHDTLDTSAPRILVNPTGKFVLGGPMGDAGLTGRKIIVDTYGGWARHGGGAFSGKDPSKVDRSAAYAMRWVAKNVVAAGLAQRVEVQVAYAIGKAAPVGLFVETFGSETVDPVKIQKAIGEVFDLRPGAIVRDLDLLRPIYAPTAAYGHFGRTDIELPWEQLDKVDDLKAAV</sequence>
<feature type="chain" id="PRO_0000302947" description="S-adenosylmethionine synthase">
    <location>
        <begin position="1"/>
        <end position="402"/>
    </location>
</feature>
<feature type="region of interest" description="Flexible loop" evidence="1">
    <location>
        <begin position="103"/>
        <end position="113"/>
    </location>
</feature>
<feature type="binding site" description="in other chain" evidence="1">
    <location>
        <position position="16"/>
    </location>
    <ligand>
        <name>ATP</name>
        <dbReference type="ChEBI" id="CHEBI:30616"/>
        <note>ligand shared between two neighboring subunits</note>
    </ligand>
</feature>
<feature type="binding site" evidence="1">
    <location>
        <position position="18"/>
    </location>
    <ligand>
        <name>Mg(2+)</name>
        <dbReference type="ChEBI" id="CHEBI:18420"/>
    </ligand>
</feature>
<feature type="binding site" evidence="1">
    <location>
        <position position="44"/>
    </location>
    <ligand>
        <name>K(+)</name>
        <dbReference type="ChEBI" id="CHEBI:29103"/>
    </ligand>
</feature>
<feature type="binding site" description="in other chain" evidence="1">
    <location>
        <position position="57"/>
    </location>
    <ligand>
        <name>L-methionine</name>
        <dbReference type="ChEBI" id="CHEBI:57844"/>
        <note>ligand shared between two neighboring subunits</note>
    </ligand>
</feature>
<feature type="binding site" description="in other chain" evidence="1">
    <location>
        <position position="103"/>
    </location>
    <ligand>
        <name>L-methionine</name>
        <dbReference type="ChEBI" id="CHEBI:57844"/>
        <note>ligand shared between two neighboring subunits</note>
    </ligand>
</feature>
<feature type="binding site" description="in other chain" evidence="1">
    <location>
        <begin position="178"/>
        <end position="180"/>
    </location>
    <ligand>
        <name>ATP</name>
        <dbReference type="ChEBI" id="CHEBI:30616"/>
        <note>ligand shared between two neighboring subunits</note>
    </ligand>
</feature>
<feature type="binding site" description="in other chain" evidence="1">
    <location>
        <begin position="249"/>
        <end position="250"/>
    </location>
    <ligand>
        <name>ATP</name>
        <dbReference type="ChEBI" id="CHEBI:30616"/>
        <note>ligand shared between two neighboring subunits</note>
    </ligand>
</feature>
<feature type="binding site" evidence="1">
    <location>
        <position position="258"/>
    </location>
    <ligand>
        <name>ATP</name>
        <dbReference type="ChEBI" id="CHEBI:30616"/>
        <note>ligand shared between two neighboring subunits</note>
    </ligand>
</feature>
<feature type="binding site" evidence="1">
    <location>
        <position position="258"/>
    </location>
    <ligand>
        <name>L-methionine</name>
        <dbReference type="ChEBI" id="CHEBI:57844"/>
        <note>ligand shared between two neighboring subunits</note>
    </ligand>
</feature>
<feature type="binding site" description="in other chain" evidence="1">
    <location>
        <begin position="264"/>
        <end position="265"/>
    </location>
    <ligand>
        <name>ATP</name>
        <dbReference type="ChEBI" id="CHEBI:30616"/>
        <note>ligand shared between two neighboring subunits</note>
    </ligand>
</feature>
<feature type="binding site" evidence="1">
    <location>
        <position position="281"/>
    </location>
    <ligand>
        <name>ATP</name>
        <dbReference type="ChEBI" id="CHEBI:30616"/>
        <note>ligand shared between two neighboring subunits</note>
    </ligand>
</feature>
<feature type="binding site" evidence="1">
    <location>
        <position position="285"/>
    </location>
    <ligand>
        <name>ATP</name>
        <dbReference type="ChEBI" id="CHEBI:30616"/>
        <note>ligand shared between two neighboring subunits</note>
    </ligand>
</feature>
<feature type="binding site" description="in other chain" evidence="1">
    <location>
        <position position="289"/>
    </location>
    <ligand>
        <name>L-methionine</name>
        <dbReference type="ChEBI" id="CHEBI:57844"/>
        <note>ligand shared between two neighboring subunits</note>
    </ligand>
</feature>